<comment type="subcellular location">
    <subcellularLocation>
        <location evidence="1">Cell membrane</location>
        <topology evidence="1">Multi-pass membrane protein</topology>
    </subcellularLocation>
</comment>
<comment type="similarity">
    <text evidence="1">Belongs to the UPF0391 family.</text>
</comment>
<organism>
    <name type="scientific">Shigella boydii serotype 18 (strain CDC 3083-94 / BS512)</name>
    <dbReference type="NCBI Taxonomy" id="344609"/>
    <lineage>
        <taxon>Bacteria</taxon>
        <taxon>Pseudomonadati</taxon>
        <taxon>Pseudomonadota</taxon>
        <taxon>Gammaproteobacteria</taxon>
        <taxon>Enterobacterales</taxon>
        <taxon>Enterobacteriaceae</taxon>
        <taxon>Shigella</taxon>
    </lineage>
</organism>
<accession>B2TZQ8</accession>
<keyword id="KW-1003">Cell membrane</keyword>
<keyword id="KW-0472">Membrane</keyword>
<keyword id="KW-1185">Reference proteome</keyword>
<keyword id="KW-0812">Transmembrane</keyword>
<keyword id="KW-1133">Transmembrane helix</keyword>
<reference key="1">
    <citation type="submission" date="2008-05" db="EMBL/GenBank/DDBJ databases">
        <title>Complete sequence of Shigella boydii serotype 18 strain BS512.</title>
        <authorList>
            <person name="Rasko D.A."/>
            <person name="Rosovitz M."/>
            <person name="Maurelli A.T."/>
            <person name="Myers G."/>
            <person name="Seshadri R."/>
            <person name="Cer R."/>
            <person name="Jiang L."/>
            <person name="Ravel J."/>
            <person name="Sebastian Y."/>
        </authorList>
    </citation>
    <scope>NUCLEOTIDE SEQUENCE [LARGE SCALE GENOMIC DNA]</scope>
    <source>
        <strain>CDC 3083-94 / BS512</strain>
    </source>
</reference>
<gene>
    <name evidence="1" type="primary">ytjA</name>
    <name type="ordered locus">SbBS512_E4920</name>
</gene>
<feature type="chain" id="PRO_1000143726" description="UPF0391 membrane protein YtjA">
    <location>
        <begin position="1"/>
        <end position="53"/>
    </location>
</feature>
<feature type="transmembrane region" description="Helical" evidence="1">
    <location>
        <begin position="4"/>
        <end position="24"/>
    </location>
</feature>
<feature type="transmembrane region" description="Helical" evidence="1">
    <location>
        <begin position="30"/>
        <end position="48"/>
    </location>
</feature>
<sequence length="53" mass="5536">MFRWGIIFLVIALIAAALGFGGLAGTAAGAAKIVFVVGIILFLVSLFMGRKRP</sequence>
<name>YTJA_SHIB3</name>
<protein>
    <recommendedName>
        <fullName evidence="1">UPF0391 membrane protein YtjA</fullName>
    </recommendedName>
</protein>
<proteinExistence type="inferred from homology"/>
<dbReference type="EMBL" id="CP001063">
    <property type="protein sequence ID" value="ACD09322.1"/>
    <property type="molecule type" value="Genomic_DNA"/>
</dbReference>
<dbReference type="RefSeq" id="WP_000490275.1">
    <property type="nucleotide sequence ID" value="NC_010658.1"/>
</dbReference>
<dbReference type="STRING" id="344609.SbBS512_E4920"/>
<dbReference type="KEGG" id="sbc:SbBS512_E4920"/>
<dbReference type="HOGENOM" id="CLU_187346_2_0_6"/>
<dbReference type="Proteomes" id="UP000001030">
    <property type="component" value="Chromosome"/>
</dbReference>
<dbReference type="GO" id="GO:0005886">
    <property type="term" value="C:plasma membrane"/>
    <property type="evidence" value="ECO:0007669"/>
    <property type="project" value="UniProtKB-SubCell"/>
</dbReference>
<dbReference type="HAMAP" id="MF_01361">
    <property type="entry name" value="UPF0391"/>
    <property type="match status" value="1"/>
</dbReference>
<dbReference type="InterPro" id="IPR009760">
    <property type="entry name" value="DUF1328"/>
</dbReference>
<dbReference type="NCBIfam" id="NF010229">
    <property type="entry name" value="PRK13682.1-4"/>
    <property type="match status" value="1"/>
</dbReference>
<dbReference type="NCBIfam" id="NF010230">
    <property type="entry name" value="PRK13682.1-5"/>
    <property type="match status" value="1"/>
</dbReference>
<dbReference type="Pfam" id="PF07043">
    <property type="entry name" value="DUF1328"/>
    <property type="match status" value="1"/>
</dbReference>
<dbReference type="PIRSF" id="PIRSF036466">
    <property type="entry name" value="UCP036466"/>
    <property type="match status" value="1"/>
</dbReference>
<evidence type="ECO:0000255" key="1">
    <source>
        <dbReference type="HAMAP-Rule" id="MF_01361"/>
    </source>
</evidence>